<sequence length="303" mass="33993">MLWFKNLMVYRLSREISLRAEEMEKQLASMAFTPCGSQDMAKMGWVPPMGSHSDALTHVANGQIVICARKEEKILPSPVIKQALEAKIAKLEAEQARKLKKTEKDSLKDEVLHSLLPRAFSRFSQTMMWIDTVNGLIMVDCASAKKAEDTLALLRKSLGSLPVVPLSMENPIELTLTEWVRSGSAAQGFQLLDEAELKSLLEDGGVIRAKKQDLTSEEITNHIEAGKVVTKLALDWQQRIQFVMCDDGSLKRLKFCDELRDQNEDIDREDFAQRFDADFILMTGELAALIQNLIEGLGGEAQR</sequence>
<proteinExistence type="inferred from homology"/>
<dbReference type="EMBL" id="CP001063">
    <property type="protein sequence ID" value="ACD06627.1"/>
    <property type="molecule type" value="Genomic_DNA"/>
</dbReference>
<dbReference type="RefSeq" id="WP_001298537.1">
    <property type="nucleotide sequence ID" value="NC_010658.1"/>
</dbReference>
<dbReference type="SMR" id="B2U3Z6"/>
<dbReference type="STRING" id="344609.SbBS512_E0311"/>
<dbReference type="GeneID" id="75202816"/>
<dbReference type="KEGG" id="sbc:SbBS512_E0311"/>
<dbReference type="HOGENOM" id="CLU_052038_1_1_6"/>
<dbReference type="Proteomes" id="UP000001030">
    <property type="component" value="Chromosome"/>
</dbReference>
<dbReference type="GO" id="GO:0043590">
    <property type="term" value="C:bacterial nucleoid"/>
    <property type="evidence" value="ECO:0007669"/>
    <property type="project" value="TreeGrafter"/>
</dbReference>
<dbReference type="GO" id="GO:0005737">
    <property type="term" value="C:cytoplasm"/>
    <property type="evidence" value="ECO:0007669"/>
    <property type="project" value="UniProtKB-UniRule"/>
</dbReference>
<dbReference type="GO" id="GO:0003690">
    <property type="term" value="F:double-stranded DNA binding"/>
    <property type="evidence" value="ECO:0007669"/>
    <property type="project" value="TreeGrafter"/>
</dbReference>
<dbReference type="GO" id="GO:0006310">
    <property type="term" value="P:DNA recombination"/>
    <property type="evidence" value="ECO:0007669"/>
    <property type="project" value="UniProtKB-UniRule"/>
</dbReference>
<dbReference type="GO" id="GO:0000018">
    <property type="term" value="P:regulation of DNA recombination"/>
    <property type="evidence" value="ECO:0007669"/>
    <property type="project" value="TreeGrafter"/>
</dbReference>
<dbReference type="HAMAP" id="MF_00194">
    <property type="entry name" value="RdgC"/>
    <property type="match status" value="1"/>
</dbReference>
<dbReference type="InterPro" id="IPR007476">
    <property type="entry name" value="RdgC"/>
</dbReference>
<dbReference type="NCBIfam" id="NF001460">
    <property type="entry name" value="PRK00321.1-1"/>
    <property type="match status" value="1"/>
</dbReference>
<dbReference type="NCBIfam" id="NF001462">
    <property type="entry name" value="PRK00321.1-3"/>
    <property type="match status" value="1"/>
</dbReference>
<dbReference type="NCBIfam" id="NF001464">
    <property type="entry name" value="PRK00321.1-5"/>
    <property type="match status" value="1"/>
</dbReference>
<dbReference type="PANTHER" id="PTHR38103">
    <property type="entry name" value="RECOMBINATION-ASSOCIATED PROTEIN RDGC"/>
    <property type="match status" value="1"/>
</dbReference>
<dbReference type="PANTHER" id="PTHR38103:SF1">
    <property type="entry name" value="RECOMBINATION-ASSOCIATED PROTEIN RDGC"/>
    <property type="match status" value="1"/>
</dbReference>
<dbReference type="Pfam" id="PF04381">
    <property type="entry name" value="RdgC"/>
    <property type="match status" value="1"/>
</dbReference>
<feature type="chain" id="PRO_1000099074" description="Recombination-associated protein RdgC">
    <location>
        <begin position="1"/>
        <end position="303"/>
    </location>
</feature>
<accession>B2U3Z6</accession>
<comment type="function">
    <text evidence="1">May be involved in recombination.</text>
</comment>
<comment type="subcellular location">
    <subcellularLocation>
        <location evidence="1">Cytoplasm</location>
        <location evidence="1">Nucleoid</location>
    </subcellularLocation>
</comment>
<comment type="similarity">
    <text evidence="1">Belongs to the RdgC family.</text>
</comment>
<keyword id="KW-0963">Cytoplasm</keyword>
<keyword id="KW-0233">DNA recombination</keyword>
<keyword id="KW-1185">Reference proteome</keyword>
<organism>
    <name type="scientific">Shigella boydii serotype 18 (strain CDC 3083-94 / BS512)</name>
    <dbReference type="NCBI Taxonomy" id="344609"/>
    <lineage>
        <taxon>Bacteria</taxon>
        <taxon>Pseudomonadati</taxon>
        <taxon>Pseudomonadota</taxon>
        <taxon>Gammaproteobacteria</taxon>
        <taxon>Enterobacterales</taxon>
        <taxon>Enterobacteriaceae</taxon>
        <taxon>Shigella</taxon>
    </lineage>
</organism>
<gene>
    <name evidence="1" type="primary">rdgC</name>
    <name type="ordered locus">SbBS512_E0311</name>
</gene>
<reference key="1">
    <citation type="submission" date="2008-05" db="EMBL/GenBank/DDBJ databases">
        <title>Complete sequence of Shigella boydii serotype 18 strain BS512.</title>
        <authorList>
            <person name="Rasko D.A."/>
            <person name="Rosovitz M."/>
            <person name="Maurelli A.T."/>
            <person name="Myers G."/>
            <person name="Seshadri R."/>
            <person name="Cer R."/>
            <person name="Jiang L."/>
            <person name="Ravel J."/>
            <person name="Sebastian Y."/>
        </authorList>
    </citation>
    <scope>NUCLEOTIDE SEQUENCE [LARGE SCALE GENOMIC DNA]</scope>
    <source>
        <strain>CDC 3083-94 / BS512</strain>
    </source>
</reference>
<protein>
    <recommendedName>
        <fullName evidence="1">Recombination-associated protein RdgC</fullName>
    </recommendedName>
</protein>
<name>RDGC_SHIB3</name>
<evidence type="ECO:0000255" key="1">
    <source>
        <dbReference type="HAMAP-Rule" id="MF_00194"/>
    </source>
</evidence>